<accession>A7MX22</accession>
<proteinExistence type="inferred from homology"/>
<name>HTPX_VIBC1</name>
<sequence>MKRIMLFLATNLAVVLVLSVVLNIVYAVTGMQPGSLSGLLVMAAVFGFGGAFISLMMSKGMALRSVGGMVIESPRNETEHWLLETVGRQAQQAGIGMPTVAIYEAADINAFATGAKRDDSLVAVSTGLLHNMTRDEAEAVLAHEVSHIANGDMVTMTLMQGVVNTFVIFLSRFIANIVASNDDEEGQGTNMMVYFGVSMVLELVFGFLASFLTMWYSRHREFHADAGAAQLVGKEKMIAALERLKMSHESQLDGTMMAFGINGKRSMTELLMSHPPLDKRISALRSQQY</sequence>
<evidence type="ECO:0000255" key="1">
    <source>
        <dbReference type="HAMAP-Rule" id="MF_00188"/>
    </source>
</evidence>
<dbReference type="EC" id="3.4.24.-" evidence="1"/>
<dbReference type="EMBL" id="CP000789">
    <property type="protein sequence ID" value="ABU70782.1"/>
    <property type="molecule type" value="Genomic_DNA"/>
</dbReference>
<dbReference type="RefSeq" id="WP_005528841.1">
    <property type="nucleotide sequence ID" value="NC_022269.1"/>
</dbReference>
<dbReference type="SMR" id="A7MX22"/>
<dbReference type="MEROPS" id="M48.002"/>
<dbReference type="KEGG" id="vha:VIBHAR_01813"/>
<dbReference type="PATRIC" id="fig|338187.25.peg.862"/>
<dbReference type="Proteomes" id="UP000008152">
    <property type="component" value="Chromosome I"/>
</dbReference>
<dbReference type="GO" id="GO:0005886">
    <property type="term" value="C:plasma membrane"/>
    <property type="evidence" value="ECO:0007669"/>
    <property type="project" value="UniProtKB-SubCell"/>
</dbReference>
<dbReference type="GO" id="GO:0004222">
    <property type="term" value="F:metalloendopeptidase activity"/>
    <property type="evidence" value="ECO:0007669"/>
    <property type="project" value="UniProtKB-UniRule"/>
</dbReference>
<dbReference type="GO" id="GO:0008270">
    <property type="term" value="F:zinc ion binding"/>
    <property type="evidence" value="ECO:0007669"/>
    <property type="project" value="UniProtKB-UniRule"/>
</dbReference>
<dbReference type="GO" id="GO:0006508">
    <property type="term" value="P:proteolysis"/>
    <property type="evidence" value="ECO:0007669"/>
    <property type="project" value="UniProtKB-KW"/>
</dbReference>
<dbReference type="CDD" id="cd07335">
    <property type="entry name" value="M48B_HtpX_like"/>
    <property type="match status" value="1"/>
</dbReference>
<dbReference type="FunFam" id="3.30.2010.10:FF:000001">
    <property type="entry name" value="Protease HtpX"/>
    <property type="match status" value="1"/>
</dbReference>
<dbReference type="Gene3D" id="3.30.2010.10">
    <property type="entry name" value="Metalloproteases ('zincins'), catalytic domain"/>
    <property type="match status" value="1"/>
</dbReference>
<dbReference type="HAMAP" id="MF_00188">
    <property type="entry name" value="Pept_M48_protease_HtpX"/>
    <property type="match status" value="1"/>
</dbReference>
<dbReference type="InterPro" id="IPR050083">
    <property type="entry name" value="HtpX_protease"/>
</dbReference>
<dbReference type="InterPro" id="IPR022919">
    <property type="entry name" value="Pept_M48_protease_HtpX"/>
</dbReference>
<dbReference type="InterPro" id="IPR001915">
    <property type="entry name" value="Peptidase_M48"/>
</dbReference>
<dbReference type="NCBIfam" id="NF003965">
    <property type="entry name" value="PRK05457.1"/>
    <property type="match status" value="1"/>
</dbReference>
<dbReference type="PANTHER" id="PTHR43221">
    <property type="entry name" value="PROTEASE HTPX"/>
    <property type="match status" value="1"/>
</dbReference>
<dbReference type="PANTHER" id="PTHR43221:SF1">
    <property type="entry name" value="PROTEASE HTPX"/>
    <property type="match status" value="1"/>
</dbReference>
<dbReference type="Pfam" id="PF01435">
    <property type="entry name" value="Peptidase_M48"/>
    <property type="match status" value="1"/>
</dbReference>
<protein>
    <recommendedName>
        <fullName evidence="1">Protease HtpX</fullName>
        <ecNumber evidence="1">3.4.24.-</ecNumber>
    </recommendedName>
    <alternativeName>
        <fullName evidence="1">Heat shock protein HtpX</fullName>
    </alternativeName>
</protein>
<organism>
    <name type="scientific">Vibrio campbellii (strain ATCC BAA-1116)</name>
    <dbReference type="NCBI Taxonomy" id="2902295"/>
    <lineage>
        <taxon>Bacteria</taxon>
        <taxon>Pseudomonadati</taxon>
        <taxon>Pseudomonadota</taxon>
        <taxon>Gammaproteobacteria</taxon>
        <taxon>Vibrionales</taxon>
        <taxon>Vibrionaceae</taxon>
        <taxon>Vibrio</taxon>
    </lineage>
</organism>
<gene>
    <name evidence="1" type="primary">htpX</name>
    <name type="ordered locus">VIBHAR_01813</name>
</gene>
<comment type="cofactor">
    <cofactor evidence="1">
        <name>Zn(2+)</name>
        <dbReference type="ChEBI" id="CHEBI:29105"/>
    </cofactor>
    <text evidence="1">Binds 1 zinc ion per subunit.</text>
</comment>
<comment type="subcellular location">
    <subcellularLocation>
        <location evidence="1">Cell inner membrane</location>
        <topology evidence="1">Multi-pass membrane protein</topology>
    </subcellularLocation>
</comment>
<comment type="similarity">
    <text evidence="1">Belongs to the peptidase M48B family.</text>
</comment>
<feature type="chain" id="PRO_1000020967" description="Protease HtpX">
    <location>
        <begin position="1"/>
        <end position="289"/>
    </location>
</feature>
<feature type="transmembrane region" description="Helical" evidence="1">
    <location>
        <begin position="4"/>
        <end position="24"/>
    </location>
</feature>
<feature type="transmembrane region" description="Helical" evidence="1">
    <location>
        <begin position="36"/>
        <end position="56"/>
    </location>
</feature>
<feature type="transmembrane region" description="Helical" evidence="1">
    <location>
        <begin position="158"/>
        <end position="178"/>
    </location>
</feature>
<feature type="transmembrane region" description="Helical" evidence="1">
    <location>
        <begin position="192"/>
        <end position="212"/>
    </location>
</feature>
<feature type="active site" evidence="1">
    <location>
        <position position="144"/>
    </location>
</feature>
<feature type="binding site" evidence="1">
    <location>
        <position position="143"/>
    </location>
    <ligand>
        <name>Zn(2+)</name>
        <dbReference type="ChEBI" id="CHEBI:29105"/>
        <note>catalytic</note>
    </ligand>
</feature>
<feature type="binding site" evidence="1">
    <location>
        <position position="147"/>
    </location>
    <ligand>
        <name>Zn(2+)</name>
        <dbReference type="ChEBI" id="CHEBI:29105"/>
        <note>catalytic</note>
    </ligand>
</feature>
<feature type="binding site" evidence="1">
    <location>
        <position position="221"/>
    </location>
    <ligand>
        <name>Zn(2+)</name>
        <dbReference type="ChEBI" id="CHEBI:29105"/>
        <note>catalytic</note>
    </ligand>
</feature>
<reference key="1">
    <citation type="submission" date="2007-08" db="EMBL/GenBank/DDBJ databases">
        <authorList>
            <consortium name="The Vibrio harveyi Genome Sequencing Project"/>
            <person name="Bassler B."/>
            <person name="Clifton S.W."/>
            <person name="Fulton L."/>
            <person name="Delehaunty K."/>
            <person name="Fronick C."/>
            <person name="Harrison M."/>
            <person name="Markivic C."/>
            <person name="Fulton R."/>
            <person name="Tin-Wollam A.-M."/>
            <person name="Shah N."/>
            <person name="Pepin K."/>
            <person name="Nash W."/>
            <person name="Thiruvilangam P."/>
            <person name="Bhonagiri V."/>
            <person name="Waters C."/>
            <person name="Tu K.C."/>
            <person name="Irgon J."/>
            <person name="Wilson R.K."/>
        </authorList>
    </citation>
    <scope>NUCLEOTIDE SEQUENCE [LARGE SCALE GENOMIC DNA]</scope>
    <source>
        <strain>ATCC BAA-1116 / BB120</strain>
    </source>
</reference>
<keyword id="KW-0997">Cell inner membrane</keyword>
<keyword id="KW-1003">Cell membrane</keyword>
<keyword id="KW-0378">Hydrolase</keyword>
<keyword id="KW-0472">Membrane</keyword>
<keyword id="KW-0479">Metal-binding</keyword>
<keyword id="KW-0482">Metalloprotease</keyword>
<keyword id="KW-0645">Protease</keyword>
<keyword id="KW-0812">Transmembrane</keyword>
<keyword id="KW-1133">Transmembrane helix</keyword>
<keyword id="KW-0862">Zinc</keyword>